<name>TTCA_SHEB5</name>
<reference key="1">
    <citation type="submission" date="2007-02" db="EMBL/GenBank/DDBJ databases">
        <title>Complete sequence of chromosome of Shewanella baltica OS155.</title>
        <authorList>
            <consortium name="US DOE Joint Genome Institute"/>
            <person name="Copeland A."/>
            <person name="Lucas S."/>
            <person name="Lapidus A."/>
            <person name="Barry K."/>
            <person name="Detter J.C."/>
            <person name="Glavina del Rio T."/>
            <person name="Hammon N."/>
            <person name="Israni S."/>
            <person name="Dalin E."/>
            <person name="Tice H."/>
            <person name="Pitluck S."/>
            <person name="Sims D.R."/>
            <person name="Brettin T."/>
            <person name="Bruce D."/>
            <person name="Han C."/>
            <person name="Tapia R."/>
            <person name="Brainard J."/>
            <person name="Schmutz J."/>
            <person name="Larimer F."/>
            <person name="Land M."/>
            <person name="Hauser L."/>
            <person name="Kyrpides N."/>
            <person name="Mikhailova N."/>
            <person name="Brettar I."/>
            <person name="Klappenbach J."/>
            <person name="Konstantinidis K."/>
            <person name="Rodrigues J."/>
            <person name="Tiedje J."/>
            <person name="Richardson P."/>
        </authorList>
    </citation>
    <scope>NUCLEOTIDE SEQUENCE [LARGE SCALE GENOMIC DNA]</scope>
    <source>
        <strain>OS155 / ATCC BAA-1091</strain>
    </source>
</reference>
<reference key="2">
    <citation type="submission" date="2007-02" db="EMBL/GenBank/DDBJ databases">
        <title>Complete sequence of plasmid pSbal01 of Shewanella baltica OS155.</title>
        <authorList>
            <consortium name="US DOE Joint Genome Institute"/>
            <person name="Copeland A."/>
            <person name="Lucas S."/>
            <person name="Lapidus A."/>
            <person name="Barry K."/>
            <person name="Detter J.C."/>
            <person name="Glavina del Rio T."/>
            <person name="Hammon N."/>
            <person name="Israni S."/>
            <person name="Dalin E."/>
            <person name="Tice H."/>
            <person name="Pitluck S."/>
            <person name="Sims D.R."/>
            <person name="Brettin T."/>
            <person name="Bruce D."/>
            <person name="Han C."/>
            <person name="Tapia R."/>
            <person name="Brainard J."/>
            <person name="Schmutz J."/>
            <person name="Larimer F."/>
            <person name="Land M."/>
            <person name="Hauser L."/>
            <person name="Kyrpides N."/>
            <person name="Mikhailova N."/>
            <person name="Brettar I."/>
            <person name="Klappenbach J."/>
            <person name="Konstantinidis K."/>
            <person name="Rodrigues J."/>
            <person name="Tiedje J."/>
            <person name="Richardson P."/>
        </authorList>
    </citation>
    <scope>NUCLEOTIDE SEQUENCE [LARGE SCALE GENOMIC DNA]</scope>
    <source>
        <strain>OS155 / ATCC BAA-1091</strain>
        <plasmid>pSbal01</plasmid>
    </source>
</reference>
<gene>
    <name evidence="1" type="primary">ttcA1</name>
    <name type="ordered locus">Sbal_2211</name>
</gene>
<gene>
    <name evidence="1" type="primary">ttcA2</name>
    <name type="ordered locus">Sbal_4497</name>
</gene>
<feature type="chain" id="PRO_0000348832" description="tRNA-cytidine(32) 2-sulfurtransferase">
    <location>
        <begin position="1"/>
        <end position="310"/>
    </location>
</feature>
<feature type="short sequence motif" description="PP-loop motif" evidence="1">
    <location>
        <begin position="45"/>
        <end position="50"/>
    </location>
</feature>
<feature type="binding site" evidence="1">
    <location>
        <position position="120"/>
    </location>
    <ligand>
        <name>[4Fe-4S] cluster</name>
        <dbReference type="ChEBI" id="CHEBI:49883"/>
    </ligand>
</feature>
<feature type="binding site" evidence="1">
    <location>
        <position position="123"/>
    </location>
    <ligand>
        <name>[4Fe-4S] cluster</name>
        <dbReference type="ChEBI" id="CHEBI:49883"/>
    </ligand>
</feature>
<feature type="binding site" evidence="1">
    <location>
        <position position="211"/>
    </location>
    <ligand>
        <name>[4Fe-4S] cluster</name>
        <dbReference type="ChEBI" id="CHEBI:49883"/>
    </ligand>
</feature>
<keyword id="KW-0004">4Fe-4S</keyword>
<keyword id="KW-0067">ATP-binding</keyword>
<keyword id="KW-0963">Cytoplasm</keyword>
<keyword id="KW-0408">Iron</keyword>
<keyword id="KW-0411">Iron-sulfur</keyword>
<keyword id="KW-0460">Magnesium</keyword>
<keyword id="KW-0479">Metal-binding</keyword>
<keyword id="KW-0547">Nucleotide-binding</keyword>
<keyword id="KW-0614">Plasmid</keyword>
<keyword id="KW-1185">Reference proteome</keyword>
<keyword id="KW-0694">RNA-binding</keyword>
<keyword id="KW-0808">Transferase</keyword>
<keyword id="KW-0819">tRNA processing</keyword>
<keyword id="KW-0820">tRNA-binding</keyword>
<organism>
    <name type="scientific">Shewanella baltica (strain OS155 / ATCC BAA-1091)</name>
    <dbReference type="NCBI Taxonomy" id="325240"/>
    <lineage>
        <taxon>Bacteria</taxon>
        <taxon>Pseudomonadati</taxon>
        <taxon>Pseudomonadota</taxon>
        <taxon>Gammaproteobacteria</taxon>
        <taxon>Alteromonadales</taxon>
        <taxon>Shewanellaceae</taxon>
        <taxon>Shewanella</taxon>
    </lineage>
</organism>
<comment type="function">
    <text evidence="1">Catalyzes the ATP-dependent 2-thiolation of cytidine in position 32 of tRNA, to form 2-thiocytidine (s(2)C32). The sulfur atoms are provided by the cysteine/cysteine desulfurase (IscS) system.</text>
</comment>
<comment type="catalytic activity">
    <reaction evidence="1">
        <text>cytidine(32) in tRNA + S-sulfanyl-L-cysteinyl-[cysteine desulfurase] + AH2 + ATP = 2-thiocytidine(32) in tRNA + L-cysteinyl-[cysteine desulfurase] + A + AMP + diphosphate + H(+)</text>
        <dbReference type="Rhea" id="RHEA:57048"/>
        <dbReference type="Rhea" id="RHEA-COMP:10288"/>
        <dbReference type="Rhea" id="RHEA-COMP:12157"/>
        <dbReference type="Rhea" id="RHEA-COMP:12158"/>
        <dbReference type="Rhea" id="RHEA-COMP:14821"/>
        <dbReference type="ChEBI" id="CHEBI:13193"/>
        <dbReference type="ChEBI" id="CHEBI:15378"/>
        <dbReference type="ChEBI" id="CHEBI:17499"/>
        <dbReference type="ChEBI" id="CHEBI:29950"/>
        <dbReference type="ChEBI" id="CHEBI:30616"/>
        <dbReference type="ChEBI" id="CHEBI:33019"/>
        <dbReference type="ChEBI" id="CHEBI:61963"/>
        <dbReference type="ChEBI" id="CHEBI:82748"/>
        <dbReference type="ChEBI" id="CHEBI:141453"/>
        <dbReference type="ChEBI" id="CHEBI:456215"/>
    </reaction>
    <physiologicalReaction direction="left-to-right" evidence="1">
        <dbReference type="Rhea" id="RHEA:57049"/>
    </physiologicalReaction>
</comment>
<comment type="cofactor">
    <cofactor evidence="1">
        <name>Mg(2+)</name>
        <dbReference type="ChEBI" id="CHEBI:18420"/>
    </cofactor>
</comment>
<comment type="cofactor">
    <cofactor evidence="1">
        <name>[4Fe-4S] cluster</name>
        <dbReference type="ChEBI" id="CHEBI:49883"/>
    </cofactor>
    <text evidence="1">Binds 1 [4Fe-4S] cluster per subunit. The cluster is chelated by three Cys residues, the fourth Fe has a free coordination site that may bind a sulfur atom transferred from the persulfide of IscS.</text>
</comment>
<comment type="pathway">
    <text evidence="1">tRNA modification.</text>
</comment>
<comment type="subunit">
    <text evidence="1">Homodimer.</text>
</comment>
<comment type="subcellular location">
    <subcellularLocation>
        <location evidence="1">Cytoplasm</location>
    </subcellularLocation>
</comment>
<comment type="miscellaneous">
    <text evidence="1">The thiolation reaction likely consists of two steps: a first activation step by ATP to form an adenylated intermediate of the target base of tRNA, and a second nucleophilic substitution step of the sulfur (S) atom supplied by the hydrosulfide attached to the Fe-S cluster.</text>
</comment>
<comment type="similarity">
    <text evidence="1">Belongs to the TtcA family.</text>
</comment>
<evidence type="ECO:0000255" key="1">
    <source>
        <dbReference type="HAMAP-Rule" id="MF_01850"/>
    </source>
</evidence>
<geneLocation type="plasmid">
    <name>pSbal01</name>
</geneLocation>
<proteinExistence type="inferred from homology"/>
<sequence length="310" mass="35121">MSEELSKKHTNRLNKLQKRLRREVGSAIADYNMIEDGDKIMCCLSGGKDSYAMLDILMNLQQRAPIQFEIIAVNLDQKQPGFPEHVLPAYLEKLNVPYHILEKDTYSIVKDKIPEGKTTCSLCSRLRRGTLYGFAQRIGATKIALGHHRDDIIETLFLNMFFGGKMKAMPPKLLSDDGANVVIRPLAYCREKDLEEYANLKEFPIIPCNLCGSQENLKRAAVKDMLNQWDRQYPGRIETIFTAMQNTAPSQGVDREQFDFVSLTRDPDAPMRGDVAEANLPAFDFLDIANSGRIDLDAAKRIDIVNTYEV</sequence>
<accession>A3D4P4</accession>
<dbReference type="EC" id="2.8.1.-" evidence="1"/>
<dbReference type="EMBL" id="CP000563">
    <property type="protein sequence ID" value="ABN61707.1"/>
    <property type="molecule type" value="Genomic_DNA"/>
</dbReference>
<dbReference type="EMBL" id="CP000564">
    <property type="protein sequence ID" value="ABN63860.1"/>
    <property type="molecule type" value="Genomic_DNA"/>
</dbReference>
<dbReference type="SMR" id="A3D4P4"/>
<dbReference type="STRING" id="325240.Sbal_2211"/>
<dbReference type="KEGG" id="sbl:Sbal_2211"/>
<dbReference type="KEGG" id="sbl:Sbal_4497"/>
<dbReference type="HOGENOM" id="CLU_026481_0_0_6"/>
<dbReference type="OrthoDB" id="9801054at2"/>
<dbReference type="Proteomes" id="UP000001557">
    <property type="component" value="Chromosome"/>
</dbReference>
<dbReference type="Proteomes" id="UP000001557">
    <property type="component" value="Plasmid pSbal01"/>
</dbReference>
<dbReference type="GO" id="GO:0005737">
    <property type="term" value="C:cytoplasm"/>
    <property type="evidence" value="ECO:0007669"/>
    <property type="project" value="UniProtKB-SubCell"/>
</dbReference>
<dbReference type="GO" id="GO:0051539">
    <property type="term" value="F:4 iron, 4 sulfur cluster binding"/>
    <property type="evidence" value="ECO:0007669"/>
    <property type="project" value="UniProtKB-UniRule"/>
</dbReference>
<dbReference type="GO" id="GO:0005524">
    <property type="term" value="F:ATP binding"/>
    <property type="evidence" value="ECO:0007669"/>
    <property type="project" value="UniProtKB-UniRule"/>
</dbReference>
<dbReference type="GO" id="GO:0000287">
    <property type="term" value="F:magnesium ion binding"/>
    <property type="evidence" value="ECO:0007669"/>
    <property type="project" value="UniProtKB-UniRule"/>
</dbReference>
<dbReference type="GO" id="GO:0016783">
    <property type="term" value="F:sulfurtransferase activity"/>
    <property type="evidence" value="ECO:0007669"/>
    <property type="project" value="UniProtKB-UniRule"/>
</dbReference>
<dbReference type="GO" id="GO:0000049">
    <property type="term" value="F:tRNA binding"/>
    <property type="evidence" value="ECO:0007669"/>
    <property type="project" value="UniProtKB-KW"/>
</dbReference>
<dbReference type="GO" id="GO:0034227">
    <property type="term" value="P:tRNA thio-modification"/>
    <property type="evidence" value="ECO:0007669"/>
    <property type="project" value="UniProtKB-UniRule"/>
</dbReference>
<dbReference type="CDD" id="cd24138">
    <property type="entry name" value="TtcA-like"/>
    <property type="match status" value="1"/>
</dbReference>
<dbReference type="Gene3D" id="3.40.50.620">
    <property type="entry name" value="HUPs"/>
    <property type="match status" value="1"/>
</dbReference>
<dbReference type="HAMAP" id="MF_01850">
    <property type="entry name" value="TtcA"/>
    <property type="match status" value="1"/>
</dbReference>
<dbReference type="InterPro" id="IPR014729">
    <property type="entry name" value="Rossmann-like_a/b/a_fold"/>
</dbReference>
<dbReference type="InterPro" id="IPR011063">
    <property type="entry name" value="TilS/TtcA_N"/>
</dbReference>
<dbReference type="InterPro" id="IPR012089">
    <property type="entry name" value="tRNA_Cyd_32_2_STrfase"/>
</dbReference>
<dbReference type="InterPro" id="IPR035107">
    <property type="entry name" value="tRNA_thiolation_TtcA_Ctu1"/>
</dbReference>
<dbReference type="NCBIfam" id="NF007972">
    <property type="entry name" value="PRK10696.1"/>
    <property type="match status" value="1"/>
</dbReference>
<dbReference type="PANTHER" id="PTHR43686:SF1">
    <property type="entry name" value="AMINOTRAN_5 DOMAIN-CONTAINING PROTEIN"/>
    <property type="match status" value="1"/>
</dbReference>
<dbReference type="PANTHER" id="PTHR43686">
    <property type="entry name" value="SULFURTRANSFERASE-RELATED"/>
    <property type="match status" value="1"/>
</dbReference>
<dbReference type="Pfam" id="PF01171">
    <property type="entry name" value="ATP_bind_3"/>
    <property type="match status" value="1"/>
</dbReference>
<dbReference type="PIRSF" id="PIRSF004976">
    <property type="entry name" value="ATPase_YdaO"/>
    <property type="match status" value="1"/>
</dbReference>
<dbReference type="SUPFAM" id="SSF52402">
    <property type="entry name" value="Adenine nucleotide alpha hydrolases-like"/>
    <property type="match status" value="1"/>
</dbReference>
<protein>
    <recommendedName>
        <fullName evidence="1">tRNA-cytidine(32) 2-sulfurtransferase</fullName>
        <ecNumber evidence="1">2.8.1.-</ecNumber>
    </recommendedName>
    <alternativeName>
        <fullName evidence="1">Two-thiocytidine biosynthesis protein A</fullName>
    </alternativeName>
    <alternativeName>
        <fullName evidence="1">tRNA 2-thiocytidine biosynthesis protein TtcA</fullName>
    </alternativeName>
</protein>